<feature type="chain" id="PRO_0000438347" description="Molybdopterin synthase sulfur carrier subunit">
    <location>
        <begin position="1"/>
        <end position="83"/>
    </location>
</feature>
<keyword id="KW-0501">Molybdenum cofactor biosynthesis</keyword>
<keyword id="KW-0547">Nucleotide-binding</keyword>
<keyword id="KW-1185">Reference proteome</keyword>
<reference key="1">
    <citation type="journal article" date="1998" name="Nature">
        <title>Deciphering the biology of Mycobacterium tuberculosis from the complete genome sequence.</title>
        <authorList>
            <person name="Cole S.T."/>
            <person name="Brosch R."/>
            <person name="Parkhill J."/>
            <person name="Garnier T."/>
            <person name="Churcher C.M."/>
            <person name="Harris D.E."/>
            <person name="Gordon S.V."/>
            <person name="Eiglmeier K."/>
            <person name="Gas S."/>
            <person name="Barry C.E. III"/>
            <person name="Tekaia F."/>
            <person name="Badcock K."/>
            <person name="Basham D."/>
            <person name="Brown D."/>
            <person name="Chillingworth T."/>
            <person name="Connor R."/>
            <person name="Davies R.M."/>
            <person name="Devlin K."/>
            <person name="Feltwell T."/>
            <person name="Gentles S."/>
            <person name="Hamlin N."/>
            <person name="Holroyd S."/>
            <person name="Hornsby T."/>
            <person name="Jagels K."/>
            <person name="Krogh A."/>
            <person name="McLean J."/>
            <person name="Moule S."/>
            <person name="Murphy L.D."/>
            <person name="Oliver S."/>
            <person name="Osborne J."/>
            <person name="Quail M.A."/>
            <person name="Rajandream M.A."/>
            <person name="Rogers J."/>
            <person name="Rutter S."/>
            <person name="Seeger K."/>
            <person name="Skelton S."/>
            <person name="Squares S."/>
            <person name="Squares R."/>
            <person name="Sulston J.E."/>
            <person name="Taylor K."/>
            <person name="Whitehead S."/>
            <person name="Barrell B.G."/>
        </authorList>
    </citation>
    <scope>NUCLEOTIDE SEQUENCE [LARGE SCALE GENOMIC DNA]</scope>
    <source>
        <strain>ATCC 25618 / H37Rv</strain>
    </source>
</reference>
<reference key="2">
    <citation type="journal article" date="2010" name="PLoS Pathog.">
        <title>High content phenotypic cell-based visual screen identifies Mycobacterium tuberculosis acyltrehalose-containing glycolipids involved in phagosome remodeling.</title>
        <authorList>
            <person name="Brodin P."/>
            <person name="Poquet Y."/>
            <person name="Levillain F."/>
            <person name="Peguillet I."/>
            <person name="Larrouy-Maumus G."/>
            <person name="Gilleron M."/>
            <person name="Ewann F."/>
            <person name="Christophe T."/>
            <person name="Fenistein D."/>
            <person name="Jang J."/>
            <person name="Jang M.S."/>
            <person name="Park S.J."/>
            <person name="Rauzier J."/>
            <person name="Carralot J.P."/>
            <person name="Shrimpton R."/>
            <person name="Genovesio A."/>
            <person name="Gonzalo-Asensio J.A."/>
            <person name="Puzo G."/>
            <person name="Martin C."/>
            <person name="Brosch R."/>
            <person name="Stewart G.R."/>
            <person name="Gicquel B."/>
            <person name="Neyrolles O."/>
        </authorList>
    </citation>
    <scope>FUNCTION</scope>
    <scope>DISRUPTION PHENOTYPE</scope>
    <source>
        <strain>Beijing GC1237</strain>
    </source>
</reference>
<name>MOAD_MYCTU</name>
<comment type="function">
    <text evidence="1 2 6">Involved in sulfur transfer in the conversion of molybdopterin precursor Z to molybdopterin (By similarity). Probably plays a role in host phagosome maturation arrest (PubMed:20844580).</text>
</comment>
<comment type="pathway">
    <text evidence="2">Cofactor biosynthesis; molybdopterin biosynthesis.</text>
</comment>
<comment type="disruption phenotype">
    <text evidence="3">Grows normally in liquid culture, traffics into host (human and mouse) acidified compartments early after phagocytosis, suggesting it no longer arrests phagosome maturation as well as wild-type, impaired growth in mouse macrophages (PubMed:20844580).</text>
</comment>
<comment type="similarity">
    <text evidence="5">Belongs to the MoaD family.</text>
</comment>
<gene>
    <name type="primary">moaD1</name>
    <name type="ordered locus">Rv3112</name>
</gene>
<organism>
    <name type="scientific">Mycobacterium tuberculosis (strain ATCC 25618 / H37Rv)</name>
    <dbReference type="NCBI Taxonomy" id="83332"/>
    <lineage>
        <taxon>Bacteria</taxon>
        <taxon>Bacillati</taxon>
        <taxon>Actinomycetota</taxon>
        <taxon>Actinomycetes</taxon>
        <taxon>Mycobacteriales</taxon>
        <taxon>Mycobacteriaceae</taxon>
        <taxon>Mycobacterium</taxon>
        <taxon>Mycobacterium tuberculosis complex</taxon>
    </lineage>
</organism>
<proteinExistence type="inferred from homology"/>
<evidence type="ECO:0000250" key="1">
    <source>
        <dbReference type="UniProtKB" id="Q6YVX4"/>
    </source>
</evidence>
<evidence type="ECO:0000255" key="2">
    <source>
        <dbReference type="RuleBase" id="RU362014"/>
    </source>
</evidence>
<evidence type="ECO:0000269" key="3">
    <source>
    </source>
</evidence>
<evidence type="ECO:0000303" key="4">
    <source>
    </source>
</evidence>
<evidence type="ECO:0000305" key="5"/>
<evidence type="ECO:0000305" key="6">
    <source>
    </source>
</evidence>
<sequence length="83" mass="9188">MIKVNVLYFGAVREACDETPREEVEVQNGTDVGNLVDQLQQKYPRLRDHCQRVQMAVNQFIAPLSTVLGDGDEVAFIPQVAGG</sequence>
<protein>
    <recommendedName>
        <fullName evidence="2 4">Molybdopterin synthase sulfur carrier subunit</fullName>
    </recommendedName>
</protein>
<accession>L7N6B4</accession>
<accession>I6XG86</accession>
<dbReference type="EMBL" id="AL123456">
    <property type="protein sequence ID" value="CCP45922.1"/>
    <property type="molecule type" value="Genomic_DNA"/>
</dbReference>
<dbReference type="RefSeq" id="YP_177928.1">
    <property type="nucleotide sequence ID" value="NC_000962.3"/>
</dbReference>
<dbReference type="SMR" id="L7N6B4"/>
<dbReference type="STRING" id="83332.Rv3112"/>
<dbReference type="PaxDb" id="83332-Rv3112"/>
<dbReference type="DNASU" id="888897"/>
<dbReference type="GeneID" id="888897"/>
<dbReference type="KEGG" id="mtu:Rv3112"/>
<dbReference type="KEGG" id="mtv:RVBD_3112"/>
<dbReference type="PATRIC" id="fig|83332.12.peg.3471"/>
<dbReference type="TubercuList" id="Rv3112"/>
<dbReference type="eggNOG" id="COG1977">
    <property type="taxonomic scope" value="Bacteria"/>
</dbReference>
<dbReference type="HOGENOM" id="CLU_187633_0_0_11"/>
<dbReference type="InParanoid" id="L7N6B4"/>
<dbReference type="OrthoDB" id="9801945at2"/>
<dbReference type="PhylomeDB" id="L7N6B4"/>
<dbReference type="UniPathway" id="UPA00344"/>
<dbReference type="PHI-base" id="PHI:7749"/>
<dbReference type="Proteomes" id="UP000001584">
    <property type="component" value="Chromosome"/>
</dbReference>
<dbReference type="GO" id="GO:1990133">
    <property type="term" value="C:molybdopterin adenylyltransferase complex"/>
    <property type="evidence" value="ECO:0000318"/>
    <property type="project" value="GO_Central"/>
</dbReference>
<dbReference type="GO" id="GO:0000166">
    <property type="term" value="F:nucleotide binding"/>
    <property type="evidence" value="ECO:0007669"/>
    <property type="project" value="UniProtKB-KW"/>
</dbReference>
<dbReference type="GO" id="GO:0006777">
    <property type="term" value="P:Mo-molybdopterin cofactor biosynthetic process"/>
    <property type="evidence" value="ECO:0000318"/>
    <property type="project" value="GO_Central"/>
</dbReference>
<dbReference type="CDD" id="cd00754">
    <property type="entry name" value="Ubl_MoaD"/>
    <property type="match status" value="1"/>
</dbReference>
<dbReference type="FunFam" id="3.10.20.30:FF:000010">
    <property type="entry name" value="Molybdopterin synthase sulfur carrier subunit"/>
    <property type="match status" value="1"/>
</dbReference>
<dbReference type="Gene3D" id="3.10.20.30">
    <property type="match status" value="1"/>
</dbReference>
<dbReference type="InterPro" id="IPR012675">
    <property type="entry name" value="Beta-grasp_dom_sf"/>
</dbReference>
<dbReference type="InterPro" id="IPR044672">
    <property type="entry name" value="MOCS2A"/>
</dbReference>
<dbReference type="InterPro" id="IPR016155">
    <property type="entry name" value="Mopterin_synth/thiamin_S_b"/>
</dbReference>
<dbReference type="InterPro" id="IPR003749">
    <property type="entry name" value="ThiS/MoaD-like"/>
</dbReference>
<dbReference type="NCBIfam" id="TIGR01682">
    <property type="entry name" value="moaD"/>
    <property type="match status" value="1"/>
</dbReference>
<dbReference type="PANTHER" id="PTHR33359">
    <property type="entry name" value="MOLYBDOPTERIN SYNTHASE SULFUR CARRIER SUBUNIT"/>
    <property type="match status" value="1"/>
</dbReference>
<dbReference type="PANTHER" id="PTHR33359:SF1">
    <property type="entry name" value="MOLYBDOPTERIN SYNTHASE SULFUR CARRIER SUBUNIT"/>
    <property type="match status" value="1"/>
</dbReference>
<dbReference type="Pfam" id="PF02597">
    <property type="entry name" value="ThiS"/>
    <property type="match status" value="1"/>
</dbReference>
<dbReference type="SUPFAM" id="SSF54285">
    <property type="entry name" value="MoaD/ThiS"/>
    <property type="match status" value="1"/>
</dbReference>